<accession>B5KL30</accession>
<protein>
    <recommendedName>
        <fullName>Kunitz-type serine protease inhibitor scutellin-4</fullName>
    </recommendedName>
</protein>
<dbReference type="EMBL" id="EF990738">
    <property type="protein sequence ID" value="ABV64392.1"/>
    <property type="molecule type" value="mRNA"/>
</dbReference>
<dbReference type="SMR" id="B5KL30"/>
<dbReference type="MEROPS" id="I02.052"/>
<dbReference type="GO" id="GO:0005615">
    <property type="term" value="C:extracellular space"/>
    <property type="evidence" value="ECO:0007669"/>
    <property type="project" value="TreeGrafter"/>
</dbReference>
<dbReference type="GO" id="GO:0004867">
    <property type="term" value="F:serine-type endopeptidase inhibitor activity"/>
    <property type="evidence" value="ECO:0007669"/>
    <property type="project" value="UniProtKB-KW"/>
</dbReference>
<dbReference type="CDD" id="cd22594">
    <property type="entry name" value="Kunitz_textilinin-like"/>
    <property type="match status" value="1"/>
</dbReference>
<dbReference type="FunFam" id="4.10.410.10:FF:000004">
    <property type="entry name" value="Tissue factor pathway inhibitor"/>
    <property type="match status" value="1"/>
</dbReference>
<dbReference type="Gene3D" id="4.10.410.10">
    <property type="entry name" value="Pancreatic trypsin inhibitor Kunitz domain"/>
    <property type="match status" value="1"/>
</dbReference>
<dbReference type="InterPro" id="IPR002223">
    <property type="entry name" value="Kunitz_BPTI"/>
</dbReference>
<dbReference type="InterPro" id="IPR036880">
    <property type="entry name" value="Kunitz_BPTI_sf"/>
</dbReference>
<dbReference type="InterPro" id="IPR020901">
    <property type="entry name" value="Prtase_inh_Kunz-CS"/>
</dbReference>
<dbReference type="InterPro" id="IPR050098">
    <property type="entry name" value="TFPI/VKTCI-like"/>
</dbReference>
<dbReference type="PANTHER" id="PTHR10083">
    <property type="entry name" value="KUNITZ-TYPE PROTEASE INHIBITOR-RELATED"/>
    <property type="match status" value="1"/>
</dbReference>
<dbReference type="PANTHER" id="PTHR10083:SF376">
    <property type="entry name" value="SERINE PEPTIDASE INHIBITOR, KUNITZ TYPE, 3"/>
    <property type="match status" value="1"/>
</dbReference>
<dbReference type="Pfam" id="PF00014">
    <property type="entry name" value="Kunitz_BPTI"/>
    <property type="match status" value="1"/>
</dbReference>
<dbReference type="PRINTS" id="PR00759">
    <property type="entry name" value="BASICPTASE"/>
</dbReference>
<dbReference type="SMART" id="SM00131">
    <property type="entry name" value="KU"/>
    <property type="match status" value="1"/>
</dbReference>
<dbReference type="SUPFAM" id="SSF57362">
    <property type="entry name" value="BPTI-like"/>
    <property type="match status" value="1"/>
</dbReference>
<dbReference type="PROSITE" id="PS00280">
    <property type="entry name" value="BPTI_KUNITZ_1"/>
    <property type="match status" value="1"/>
</dbReference>
<dbReference type="PROSITE" id="PS50279">
    <property type="entry name" value="BPTI_KUNITZ_2"/>
    <property type="match status" value="1"/>
</dbReference>
<evidence type="ECO:0000250" key="1"/>
<evidence type="ECO:0000255" key="2"/>
<evidence type="ECO:0000255" key="3">
    <source>
        <dbReference type="PROSITE-ProRule" id="PRU00031"/>
    </source>
</evidence>
<evidence type="ECO:0000305" key="4"/>
<comment type="function">
    <text evidence="1">Serine protease inhibitor.</text>
</comment>
<comment type="subcellular location">
    <subcellularLocation>
        <location evidence="1">Secreted</location>
    </subcellularLocation>
</comment>
<comment type="tissue specificity">
    <text>Expressed by the venom gland.</text>
</comment>
<comment type="similarity">
    <text evidence="4">Belongs to the venom Kunitz-type family.</text>
</comment>
<keyword id="KW-1015">Disulfide bond</keyword>
<keyword id="KW-0646">Protease inhibitor</keyword>
<keyword id="KW-0964">Secreted</keyword>
<keyword id="KW-0722">Serine protease inhibitor</keyword>
<keyword id="KW-0732">Signal</keyword>
<proteinExistence type="evidence at transcript level"/>
<organism>
    <name type="scientific">Oxyuranus scutellatus scutellatus</name>
    <name type="common">Australian taipan</name>
    <name type="synonym">Coastal taipan</name>
    <dbReference type="NCBI Taxonomy" id="8667"/>
    <lineage>
        <taxon>Eukaryota</taxon>
        <taxon>Metazoa</taxon>
        <taxon>Chordata</taxon>
        <taxon>Craniata</taxon>
        <taxon>Vertebrata</taxon>
        <taxon>Euteleostomi</taxon>
        <taxon>Lepidosauria</taxon>
        <taxon>Squamata</taxon>
        <taxon>Bifurcata</taxon>
        <taxon>Unidentata</taxon>
        <taxon>Episquamata</taxon>
        <taxon>Toxicofera</taxon>
        <taxon>Serpentes</taxon>
        <taxon>Colubroidea</taxon>
        <taxon>Elapidae</taxon>
        <taxon>Hydrophiinae</taxon>
        <taxon>Oxyuranus</taxon>
    </lineage>
</organism>
<sequence length="83" mass="9063">MSSGGLLLLLGLLTLWAELTPVSSKDHPEFCELPADSGPCRGILHAFYYHPVHRTCLGFIYGGCYGNANNFKTIDECKRTCAA</sequence>
<reference key="1">
    <citation type="submission" date="2007-06" db="EMBL/GenBank/DDBJ databases">
        <title>Identification of Kunitz-type serine protease inhibitors from the venom glands of Australian elapid snakes.</title>
        <authorList>
            <person name="St Pierre L."/>
            <person name="Earl S."/>
        </authorList>
    </citation>
    <scope>NUCLEOTIDE SEQUENCE [MRNA]</scope>
</reference>
<feature type="signal peptide" evidence="2">
    <location>
        <begin position="1"/>
        <end position="24"/>
    </location>
</feature>
<feature type="chain" id="PRO_5000395589" description="Kunitz-type serine protease inhibitor scutellin-4">
    <location>
        <begin position="25"/>
        <end position="83"/>
    </location>
</feature>
<feature type="domain" description="BPTI/Kunitz inhibitor" evidence="3">
    <location>
        <begin position="31"/>
        <end position="81"/>
    </location>
</feature>
<feature type="site" description="Reactive bond for trypsin" evidence="1">
    <location>
        <begin position="41"/>
        <end position="42"/>
    </location>
</feature>
<feature type="disulfide bond" evidence="3">
    <location>
        <begin position="31"/>
        <end position="81"/>
    </location>
</feature>
<feature type="disulfide bond" evidence="3">
    <location>
        <begin position="40"/>
        <end position="64"/>
    </location>
</feature>
<feature type="disulfide bond" evidence="3">
    <location>
        <begin position="56"/>
        <end position="77"/>
    </location>
</feature>
<name>VKT4_OXYSC</name>